<dbReference type="EC" id="3.6.1.9" evidence="1"/>
<dbReference type="EMBL" id="CP001079">
    <property type="protein sequence ID" value="ACM49433.1"/>
    <property type="molecule type" value="Genomic_DNA"/>
</dbReference>
<dbReference type="RefSeq" id="WP_010264951.1">
    <property type="nucleotide sequence ID" value="NC_012026.1"/>
</dbReference>
<dbReference type="SMR" id="B9KIX1"/>
<dbReference type="STRING" id="320483.AMF_588"/>
<dbReference type="GeneID" id="7398031"/>
<dbReference type="KEGG" id="amf:AMF_588"/>
<dbReference type="PATRIC" id="fig|320483.3.peg.681"/>
<dbReference type="eggNOG" id="COG0424">
    <property type="taxonomic scope" value="Bacteria"/>
</dbReference>
<dbReference type="HOGENOM" id="CLU_040416_2_0_5"/>
<dbReference type="Proteomes" id="UP000007307">
    <property type="component" value="Chromosome"/>
</dbReference>
<dbReference type="GO" id="GO:0005737">
    <property type="term" value="C:cytoplasm"/>
    <property type="evidence" value="ECO:0007669"/>
    <property type="project" value="UniProtKB-SubCell"/>
</dbReference>
<dbReference type="GO" id="GO:0047429">
    <property type="term" value="F:nucleoside triphosphate diphosphatase activity"/>
    <property type="evidence" value="ECO:0007669"/>
    <property type="project" value="UniProtKB-EC"/>
</dbReference>
<dbReference type="GO" id="GO:0009117">
    <property type="term" value="P:nucleotide metabolic process"/>
    <property type="evidence" value="ECO:0007669"/>
    <property type="project" value="UniProtKB-KW"/>
</dbReference>
<dbReference type="CDD" id="cd00555">
    <property type="entry name" value="Maf"/>
    <property type="match status" value="1"/>
</dbReference>
<dbReference type="Gene3D" id="3.90.950.10">
    <property type="match status" value="1"/>
</dbReference>
<dbReference type="HAMAP" id="MF_00528">
    <property type="entry name" value="Maf"/>
    <property type="match status" value="1"/>
</dbReference>
<dbReference type="InterPro" id="IPR029001">
    <property type="entry name" value="ITPase-like_fam"/>
</dbReference>
<dbReference type="InterPro" id="IPR003697">
    <property type="entry name" value="Maf-like"/>
</dbReference>
<dbReference type="NCBIfam" id="TIGR00172">
    <property type="entry name" value="maf"/>
    <property type="match status" value="1"/>
</dbReference>
<dbReference type="NCBIfam" id="NF010946">
    <property type="entry name" value="PRK14366.1"/>
    <property type="match status" value="1"/>
</dbReference>
<dbReference type="PANTHER" id="PTHR43213">
    <property type="entry name" value="BIFUNCTIONAL DTTP/UTP PYROPHOSPHATASE/METHYLTRANSFERASE PROTEIN-RELATED"/>
    <property type="match status" value="1"/>
</dbReference>
<dbReference type="PANTHER" id="PTHR43213:SF5">
    <property type="entry name" value="BIFUNCTIONAL DTTP_UTP PYROPHOSPHATASE_METHYLTRANSFERASE PROTEIN-RELATED"/>
    <property type="match status" value="1"/>
</dbReference>
<dbReference type="Pfam" id="PF02545">
    <property type="entry name" value="Maf"/>
    <property type="match status" value="1"/>
</dbReference>
<dbReference type="PIRSF" id="PIRSF006305">
    <property type="entry name" value="Maf"/>
    <property type="match status" value="1"/>
</dbReference>
<dbReference type="SUPFAM" id="SSF52972">
    <property type="entry name" value="ITPase-like"/>
    <property type="match status" value="1"/>
</dbReference>
<reference key="1">
    <citation type="journal article" date="2009" name="BMC Genomics">
        <title>Conservation in the face of diversity: multistrain analysis of an intracellular bacterium.</title>
        <authorList>
            <person name="Dark M.J."/>
            <person name="Herndon D.R."/>
            <person name="Kappmeyer L.S."/>
            <person name="Gonzales M.P."/>
            <person name="Nordeen E."/>
            <person name="Palmer G.H."/>
            <person name="Knowles D.P. Jr."/>
            <person name="Brayton K.A."/>
        </authorList>
    </citation>
    <scope>NUCLEOTIDE SEQUENCE [LARGE SCALE GENOMIC DNA]</scope>
    <source>
        <strain>Florida</strain>
    </source>
</reference>
<gene>
    <name type="ordered locus">AMF_588</name>
</gene>
<comment type="function">
    <text evidence="1">Nucleoside triphosphate pyrophosphatase. May have a dual role in cell division arrest and in preventing the incorporation of modified nucleotides into cellular nucleic acids.</text>
</comment>
<comment type="catalytic activity">
    <reaction evidence="1">
        <text>a ribonucleoside 5'-triphosphate + H2O = a ribonucleoside 5'-phosphate + diphosphate + H(+)</text>
        <dbReference type="Rhea" id="RHEA:23996"/>
        <dbReference type="ChEBI" id="CHEBI:15377"/>
        <dbReference type="ChEBI" id="CHEBI:15378"/>
        <dbReference type="ChEBI" id="CHEBI:33019"/>
        <dbReference type="ChEBI" id="CHEBI:58043"/>
        <dbReference type="ChEBI" id="CHEBI:61557"/>
        <dbReference type="EC" id="3.6.1.9"/>
    </reaction>
</comment>
<comment type="catalytic activity">
    <reaction evidence="1">
        <text>a 2'-deoxyribonucleoside 5'-triphosphate + H2O = a 2'-deoxyribonucleoside 5'-phosphate + diphosphate + H(+)</text>
        <dbReference type="Rhea" id="RHEA:44644"/>
        <dbReference type="ChEBI" id="CHEBI:15377"/>
        <dbReference type="ChEBI" id="CHEBI:15378"/>
        <dbReference type="ChEBI" id="CHEBI:33019"/>
        <dbReference type="ChEBI" id="CHEBI:61560"/>
        <dbReference type="ChEBI" id="CHEBI:65317"/>
        <dbReference type="EC" id="3.6.1.9"/>
    </reaction>
</comment>
<comment type="cofactor">
    <cofactor evidence="1">
        <name>a divalent metal cation</name>
        <dbReference type="ChEBI" id="CHEBI:60240"/>
    </cofactor>
</comment>
<comment type="subcellular location">
    <subcellularLocation>
        <location evidence="1">Cytoplasm</location>
    </subcellularLocation>
</comment>
<comment type="similarity">
    <text evidence="1">Belongs to the Maf family.</text>
</comment>
<accession>B9KIX1</accession>
<evidence type="ECO:0000255" key="1">
    <source>
        <dbReference type="HAMAP-Rule" id="MF_00528"/>
    </source>
</evidence>
<organism>
    <name type="scientific">Anaplasma marginale (strain Florida)</name>
    <dbReference type="NCBI Taxonomy" id="320483"/>
    <lineage>
        <taxon>Bacteria</taxon>
        <taxon>Pseudomonadati</taxon>
        <taxon>Pseudomonadota</taxon>
        <taxon>Alphaproteobacteria</taxon>
        <taxon>Rickettsiales</taxon>
        <taxon>Anaplasmataceae</taxon>
        <taxon>Anaplasma</taxon>
    </lineage>
</organism>
<keyword id="KW-0963">Cytoplasm</keyword>
<keyword id="KW-0378">Hydrolase</keyword>
<keyword id="KW-0546">Nucleotide metabolism</keyword>
<keyword id="KW-1185">Reference proteome</keyword>
<proteinExistence type="inferred from homology"/>
<name>NTPP_ANAMF</name>
<sequence length="196" mass="21488">MLKIEGLVLASSSKYRLALLEQIGVVPGEVVSPNIDESLLKGELPRRYCMRMARTKADAVAALRSDKFVLGADTVAYCGKRVLSKTESEDCAVRYLEMLSGRRHRVCTSVCLRSPGGIVHERSVVSVVKFKSMSKGEIEYYISSGQWRGKAGGYGIQGFAGALISWIQGSYSSIAGLPLHETYCLLCGYFDLKHIP</sequence>
<protein>
    <recommendedName>
        <fullName evidence="1">Nucleoside triphosphate pyrophosphatase</fullName>
        <ecNumber evidence="1">3.6.1.9</ecNumber>
    </recommendedName>
    <alternativeName>
        <fullName evidence="1">Nucleotide pyrophosphatase</fullName>
        <shortName evidence="1">Nucleotide PPase</shortName>
    </alternativeName>
</protein>
<feature type="chain" id="PRO_1000146277" description="Nucleoside triphosphate pyrophosphatase">
    <location>
        <begin position="1"/>
        <end position="196"/>
    </location>
</feature>
<feature type="active site" description="Proton acceptor" evidence="1">
    <location>
        <position position="73"/>
    </location>
</feature>